<keyword id="KW-0414">Isoprene biosynthesis</keyword>
<keyword id="KW-0460">Magnesium</keyword>
<keyword id="KW-0479">Metal-binding</keyword>
<keyword id="KW-1185">Reference proteome</keyword>
<keyword id="KW-0784">Thiamine biosynthesis</keyword>
<keyword id="KW-0786">Thiamine pyrophosphate</keyword>
<keyword id="KW-0808">Transferase</keyword>
<reference key="1">
    <citation type="journal article" date="1997" name="Nature">
        <title>The complete genome sequence of the gastric pathogen Helicobacter pylori.</title>
        <authorList>
            <person name="Tomb J.-F."/>
            <person name="White O."/>
            <person name="Kerlavage A.R."/>
            <person name="Clayton R.A."/>
            <person name="Sutton G.G."/>
            <person name="Fleischmann R.D."/>
            <person name="Ketchum K.A."/>
            <person name="Klenk H.-P."/>
            <person name="Gill S.R."/>
            <person name="Dougherty B.A."/>
            <person name="Nelson K.E."/>
            <person name="Quackenbush J."/>
            <person name="Zhou L."/>
            <person name="Kirkness E.F."/>
            <person name="Peterson S.N."/>
            <person name="Loftus B.J."/>
            <person name="Richardson D.L."/>
            <person name="Dodson R.J."/>
            <person name="Khalak H.G."/>
            <person name="Glodek A."/>
            <person name="McKenney K."/>
            <person name="FitzGerald L.M."/>
            <person name="Lee N."/>
            <person name="Adams M.D."/>
            <person name="Hickey E.K."/>
            <person name="Berg D.E."/>
            <person name="Gocayne J.D."/>
            <person name="Utterback T.R."/>
            <person name="Peterson J.D."/>
            <person name="Kelley J.M."/>
            <person name="Cotton M.D."/>
            <person name="Weidman J.F."/>
            <person name="Fujii C."/>
            <person name="Bowman C."/>
            <person name="Watthey L."/>
            <person name="Wallin E."/>
            <person name="Hayes W.S."/>
            <person name="Borodovsky M."/>
            <person name="Karp P.D."/>
            <person name="Smith H.O."/>
            <person name="Fraser C.M."/>
            <person name="Venter J.C."/>
        </authorList>
    </citation>
    <scope>NUCLEOTIDE SEQUENCE [LARGE SCALE GENOMIC DNA]</scope>
    <source>
        <strain>ATCC 700392 / 26695</strain>
    </source>
</reference>
<accession>O25121</accession>
<name>DXS_HELPY</name>
<organism>
    <name type="scientific">Helicobacter pylori (strain ATCC 700392 / 26695)</name>
    <name type="common">Campylobacter pylori</name>
    <dbReference type="NCBI Taxonomy" id="85962"/>
    <lineage>
        <taxon>Bacteria</taxon>
        <taxon>Pseudomonadati</taxon>
        <taxon>Campylobacterota</taxon>
        <taxon>Epsilonproteobacteria</taxon>
        <taxon>Campylobacterales</taxon>
        <taxon>Helicobacteraceae</taxon>
        <taxon>Helicobacter</taxon>
    </lineage>
</organism>
<protein>
    <recommendedName>
        <fullName evidence="1">1-deoxy-D-xylulose-5-phosphate synthase</fullName>
        <ecNumber evidence="1">2.2.1.7</ecNumber>
    </recommendedName>
    <alternativeName>
        <fullName evidence="1">1-deoxyxylulose-5-phosphate synthase</fullName>
        <shortName evidence="1">DXP synthase</shortName>
        <shortName evidence="1">DXPS</shortName>
    </alternativeName>
</protein>
<comment type="function">
    <text evidence="1">Catalyzes the acyloin condensation reaction between C atoms 2 and 3 of pyruvate and glyceraldehyde 3-phosphate to yield 1-deoxy-D-xylulose-5-phosphate (DXP).</text>
</comment>
<comment type="catalytic activity">
    <reaction evidence="1">
        <text>D-glyceraldehyde 3-phosphate + pyruvate + H(+) = 1-deoxy-D-xylulose 5-phosphate + CO2</text>
        <dbReference type="Rhea" id="RHEA:12605"/>
        <dbReference type="ChEBI" id="CHEBI:15361"/>
        <dbReference type="ChEBI" id="CHEBI:15378"/>
        <dbReference type="ChEBI" id="CHEBI:16526"/>
        <dbReference type="ChEBI" id="CHEBI:57792"/>
        <dbReference type="ChEBI" id="CHEBI:59776"/>
        <dbReference type="EC" id="2.2.1.7"/>
    </reaction>
</comment>
<comment type="cofactor">
    <cofactor evidence="1">
        <name>Mg(2+)</name>
        <dbReference type="ChEBI" id="CHEBI:18420"/>
    </cofactor>
    <text evidence="1">Binds 1 Mg(2+) ion per subunit.</text>
</comment>
<comment type="cofactor">
    <cofactor evidence="1">
        <name>thiamine diphosphate</name>
        <dbReference type="ChEBI" id="CHEBI:58937"/>
    </cofactor>
    <text evidence="1">Binds 1 thiamine pyrophosphate per subunit.</text>
</comment>
<comment type="pathway">
    <text evidence="1">Metabolic intermediate biosynthesis; 1-deoxy-D-xylulose 5-phosphate biosynthesis; 1-deoxy-D-xylulose 5-phosphate from D-glyceraldehyde 3-phosphate and pyruvate: step 1/1.</text>
</comment>
<comment type="subunit">
    <text evidence="1">Homodimer.</text>
</comment>
<comment type="similarity">
    <text evidence="1">Belongs to the transketolase family. DXPS subfamily.</text>
</comment>
<dbReference type="EC" id="2.2.1.7" evidence="1"/>
<dbReference type="EMBL" id="AE000511">
    <property type="protein sequence ID" value="AAD07422.1"/>
    <property type="molecule type" value="Genomic_DNA"/>
</dbReference>
<dbReference type="PIR" id="B64564">
    <property type="entry name" value="B64564"/>
</dbReference>
<dbReference type="RefSeq" id="NP_207152.1">
    <property type="nucleotide sequence ID" value="NC_000915.1"/>
</dbReference>
<dbReference type="SMR" id="O25121"/>
<dbReference type="DIP" id="DIP-3091N"/>
<dbReference type="FunCoup" id="O25121">
    <property type="interactions" value="360"/>
</dbReference>
<dbReference type="IntAct" id="O25121">
    <property type="interactions" value="5"/>
</dbReference>
<dbReference type="MINT" id="O25121"/>
<dbReference type="STRING" id="85962.HP_0354"/>
<dbReference type="PaxDb" id="85962-C694_01795"/>
<dbReference type="EnsemblBacteria" id="AAD07422">
    <property type="protein sequence ID" value="AAD07422"/>
    <property type="gene ID" value="HP_0354"/>
</dbReference>
<dbReference type="KEGG" id="hpy:HP_0354"/>
<dbReference type="PATRIC" id="fig|85962.8.peg.367"/>
<dbReference type="eggNOG" id="COG1154">
    <property type="taxonomic scope" value="Bacteria"/>
</dbReference>
<dbReference type="InParanoid" id="O25121"/>
<dbReference type="OrthoDB" id="9803371at2"/>
<dbReference type="PhylomeDB" id="O25121"/>
<dbReference type="UniPathway" id="UPA00064">
    <property type="reaction ID" value="UER00091"/>
</dbReference>
<dbReference type="Proteomes" id="UP000000429">
    <property type="component" value="Chromosome"/>
</dbReference>
<dbReference type="GO" id="GO:0005829">
    <property type="term" value="C:cytosol"/>
    <property type="evidence" value="ECO:0000318"/>
    <property type="project" value="GO_Central"/>
</dbReference>
<dbReference type="GO" id="GO:0008661">
    <property type="term" value="F:1-deoxy-D-xylulose-5-phosphate synthase activity"/>
    <property type="evidence" value="ECO:0000318"/>
    <property type="project" value="GO_Central"/>
</dbReference>
<dbReference type="GO" id="GO:0000287">
    <property type="term" value="F:magnesium ion binding"/>
    <property type="evidence" value="ECO:0007669"/>
    <property type="project" value="UniProtKB-UniRule"/>
</dbReference>
<dbReference type="GO" id="GO:0030976">
    <property type="term" value="F:thiamine pyrophosphate binding"/>
    <property type="evidence" value="ECO:0007669"/>
    <property type="project" value="UniProtKB-UniRule"/>
</dbReference>
<dbReference type="GO" id="GO:0052865">
    <property type="term" value="P:1-deoxy-D-xylulose 5-phosphate biosynthetic process"/>
    <property type="evidence" value="ECO:0007669"/>
    <property type="project" value="UniProtKB-UniPathway"/>
</dbReference>
<dbReference type="GO" id="GO:0019288">
    <property type="term" value="P:isopentenyl diphosphate biosynthetic process, methylerythritol 4-phosphate pathway"/>
    <property type="evidence" value="ECO:0000318"/>
    <property type="project" value="GO_Central"/>
</dbReference>
<dbReference type="GO" id="GO:0016114">
    <property type="term" value="P:terpenoid biosynthetic process"/>
    <property type="evidence" value="ECO:0007669"/>
    <property type="project" value="UniProtKB-UniRule"/>
</dbReference>
<dbReference type="GO" id="GO:0009228">
    <property type="term" value="P:thiamine biosynthetic process"/>
    <property type="evidence" value="ECO:0007669"/>
    <property type="project" value="UniProtKB-UniRule"/>
</dbReference>
<dbReference type="CDD" id="cd02007">
    <property type="entry name" value="TPP_DXS"/>
    <property type="match status" value="1"/>
</dbReference>
<dbReference type="CDD" id="cd07033">
    <property type="entry name" value="TPP_PYR_DXS_TK_like"/>
    <property type="match status" value="1"/>
</dbReference>
<dbReference type="FunFam" id="3.40.50.970:FF:000005">
    <property type="entry name" value="1-deoxy-D-xylulose-5-phosphate synthase"/>
    <property type="match status" value="1"/>
</dbReference>
<dbReference type="Gene3D" id="3.40.50.920">
    <property type="match status" value="1"/>
</dbReference>
<dbReference type="Gene3D" id="3.40.50.970">
    <property type="match status" value="2"/>
</dbReference>
<dbReference type="HAMAP" id="MF_00315">
    <property type="entry name" value="DXP_synth"/>
    <property type="match status" value="1"/>
</dbReference>
<dbReference type="InterPro" id="IPR005477">
    <property type="entry name" value="Dxylulose-5-P_synthase"/>
</dbReference>
<dbReference type="InterPro" id="IPR029061">
    <property type="entry name" value="THDP-binding"/>
</dbReference>
<dbReference type="InterPro" id="IPR009014">
    <property type="entry name" value="Transketo_C/PFOR_II"/>
</dbReference>
<dbReference type="InterPro" id="IPR005475">
    <property type="entry name" value="Transketolase-like_Pyr-bd"/>
</dbReference>
<dbReference type="InterPro" id="IPR020826">
    <property type="entry name" value="Transketolase_BS"/>
</dbReference>
<dbReference type="InterPro" id="IPR033248">
    <property type="entry name" value="Transketolase_C"/>
</dbReference>
<dbReference type="InterPro" id="IPR049557">
    <property type="entry name" value="Transketolase_CS"/>
</dbReference>
<dbReference type="NCBIfam" id="TIGR00204">
    <property type="entry name" value="dxs"/>
    <property type="match status" value="1"/>
</dbReference>
<dbReference type="NCBIfam" id="NF003933">
    <property type="entry name" value="PRK05444.2-2"/>
    <property type="match status" value="1"/>
</dbReference>
<dbReference type="PANTHER" id="PTHR43322">
    <property type="entry name" value="1-D-DEOXYXYLULOSE 5-PHOSPHATE SYNTHASE-RELATED"/>
    <property type="match status" value="1"/>
</dbReference>
<dbReference type="PANTHER" id="PTHR43322:SF5">
    <property type="entry name" value="1-DEOXY-D-XYLULOSE-5-PHOSPHATE SYNTHASE, CHLOROPLASTIC"/>
    <property type="match status" value="1"/>
</dbReference>
<dbReference type="Pfam" id="PF13292">
    <property type="entry name" value="DXP_synthase_N"/>
    <property type="match status" value="1"/>
</dbReference>
<dbReference type="Pfam" id="PF02779">
    <property type="entry name" value="Transket_pyr"/>
    <property type="match status" value="1"/>
</dbReference>
<dbReference type="Pfam" id="PF02780">
    <property type="entry name" value="Transketolase_C"/>
    <property type="match status" value="1"/>
</dbReference>
<dbReference type="SMART" id="SM00861">
    <property type="entry name" value="Transket_pyr"/>
    <property type="match status" value="1"/>
</dbReference>
<dbReference type="SUPFAM" id="SSF52518">
    <property type="entry name" value="Thiamin diphosphate-binding fold (THDP-binding)"/>
    <property type="match status" value="2"/>
</dbReference>
<dbReference type="SUPFAM" id="SSF52922">
    <property type="entry name" value="TK C-terminal domain-like"/>
    <property type="match status" value="1"/>
</dbReference>
<dbReference type="PROSITE" id="PS00801">
    <property type="entry name" value="TRANSKETOLASE_1"/>
    <property type="match status" value="1"/>
</dbReference>
<dbReference type="PROSITE" id="PS00802">
    <property type="entry name" value="TRANSKETOLASE_2"/>
    <property type="match status" value="1"/>
</dbReference>
<sequence length="618" mass="67634">MILQNKTFDLNPNDIAGLELVCQTLRNRILEVVSANGGHLSSSLGAVELIVGMHALFDCQKNPFIFDTSHQAYAHKLLTGRFESFSTLRQFKGLSGFTKPSESAYDYFIAGHSSTSVSIGVGVAKAFCLKQALGMPIALLGDGSISAGIFYEALNELGDRKYPMIMILNDNEMSISTPIGALSKALSQLMKGPFYQSFRSKVKKILSTLPESVNYLASRFEESFKLITPGVFFEELGINYIGPINGHDLSAIIETLKLAKELKEPVLIHAQTLKGKGYKIAEGRYEKWHGVGPFDLDTGLSKKSKSAILSPTEAYSNTLLELAKKDEKIVGVTAAMPSGTGLDKLIDAYPLRFFDVAIAEQHALTSSSAMAKEGFKPFVSIYSTFLQRAYDSIVHDACISSLPIKLAIDRAGIVGEDGETHQGLLDVSYLRSIPNMVIFAPRDNETLKNAVRFANEHDSSPCAFRYPRGSFALKEGVFEPSGFVLGQSELLKKEGEILLIGYGNGVGRAHLVQLALKEKNIECALLDLRFLKPLDPNLSAIVAPYQKLYVFSDNYKLGGVASAILEFLSEQNILKPVKSFEIIDEFIMHGNTALVEKSLGLDTESLTDAILKDLGQER</sequence>
<proteinExistence type="inferred from homology"/>
<gene>
    <name evidence="1" type="primary">dxs</name>
    <name type="ordered locus">HP_0354</name>
</gene>
<evidence type="ECO:0000255" key="1">
    <source>
        <dbReference type="HAMAP-Rule" id="MF_00315"/>
    </source>
</evidence>
<feature type="chain" id="PRO_0000189119" description="1-deoxy-D-xylulose-5-phosphate synthase">
    <location>
        <begin position="1"/>
        <end position="618"/>
    </location>
</feature>
<feature type="binding site" evidence="1">
    <location>
        <position position="70"/>
    </location>
    <ligand>
        <name>thiamine diphosphate</name>
        <dbReference type="ChEBI" id="CHEBI:58937"/>
    </ligand>
</feature>
<feature type="binding site" evidence="1">
    <location>
        <begin position="111"/>
        <end position="113"/>
    </location>
    <ligand>
        <name>thiamine diphosphate</name>
        <dbReference type="ChEBI" id="CHEBI:58937"/>
    </ligand>
</feature>
<feature type="binding site" evidence="1">
    <location>
        <position position="142"/>
    </location>
    <ligand>
        <name>Mg(2+)</name>
        <dbReference type="ChEBI" id="CHEBI:18420"/>
    </ligand>
</feature>
<feature type="binding site" evidence="1">
    <location>
        <begin position="143"/>
        <end position="144"/>
    </location>
    <ligand>
        <name>thiamine diphosphate</name>
        <dbReference type="ChEBI" id="CHEBI:58937"/>
    </ligand>
</feature>
<feature type="binding site" evidence="1">
    <location>
        <position position="171"/>
    </location>
    <ligand>
        <name>Mg(2+)</name>
        <dbReference type="ChEBI" id="CHEBI:18420"/>
    </ligand>
</feature>
<feature type="binding site" evidence="1">
    <location>
        <position position="171"/>
    </location>
    <ligand>
        <name>thiamine diphosphate</name>
        <dbReference type="ChEBI" id="CHEBI:58937"/>
    </ligand>
</feature>
<feature type="binding site" evidence="1">
    <location>
        <position position="278"/>
    </location>
    <ligand>
        <name>thiamine diphosphate</name>
        <dbReference type="ChEBI" id="CHEBI:58937"/>
    </ligand>
</feature>
<feature type="binding site" evidence="1">
    <location>
        <position position="360"/>
    </location>
    <ligand>
        <name>thiamine diphosphate</name>
        <dbReference type="ChEBI" id="CHEBI:58937"/>
    </ligand>
</feature>